<accession>B5XI32</accession>
<organism>
    <name type="scientific">Streptococcus pyogenes serotype M49 (strain NZ131)</name>
    <dbReference type="NCBI Taxonomy" id="471876"/>
    <lineage>
        <taxon>Bacteria</taxon>
        <taxon>Bacillati</taxon>
        <taxon>Bacillota</taxon>
        <taxon>Bacilli</taxon>
        <taxon>Lactobacillales</taxon>
        <taxon>Streptococcaceae</taxon>
        <taxon>Streptococcus</taxon>
    </lineage>
</organism>
<name>EFP_STRPZ</name>
<sequence length="185" mass="20466">MIEASKLKAGMTFEAEGKLIRVLEASHHKPGKGNTIMRMKLRDVRTGSTFDTTYRPDEKFEQAIIETVPAQYLYKMDDTAYFMNTDTYDQYEIPVANVEQELLYILENSNVKIQFYGSEVIGVTVPTTVELTVAETQPSIKGATVTGSGKPATLETGLVVNVPDFIEAGQKLIINTAEGTYVSRA</sequence>
<comment type="function">
    <text evidence="1">Involved in peptide bond synthesis. Stimulates efficient translation and peptide-bond synthesis on native or reconstituted 70S ribosomes in vitro. Probably functions indirectly by altering the affinity of the ribosome for aminoacyl-tRNA, thus increasing their reactivity as acceptors for peptidyl transferase.</text>
</comment>
<comment type="pathway">
    <text evidence="1">Protein biosynthesis; polypeptide chain elongation.</text>
</comment>
<comment type="subcellular location">
    <subcellularLocation>
        <location evidence="1">Cytoplasm</location>
    </subcellularLocation>
</comment>
<comment type="similarity">
    <text evidence="1">Belongs to the elongation factor P family.</text>
</comment>
<evidence type="ECO:0000255" key="1">
    <source>
        <dbReference type="HAMAP-Rule" id="MF_00141"/>
    </source>
</evidence>
<keyword id="KW-0963">Cytoplasm</keyword>
<keyword id="KW-0251">Elongation factor</keyword>
<keyword id="KW-0648">Protein biosynthesis</keyword>
<reference key="1">
    <citation type="journal article" date="2008" name="J. Bacteriol.">
        <title>Genome sequence of a nephritogenic and highly transformable M49 strain of Streptococcus pyogenes.</title>
        <authorList>
            <person name="McShan W.M."/>
            <person name="Ferretti J.J."/>
            <person name="Karasawa T."/>
            <person name="Suvorov A.N."/>
            <person name="Lin S."/>
            <person name="Qin B."/>
            <person name="Jia H."/>
            <person name="Kenton S."/>
            <person name="Najar F."/>
            <person name="Wu H."/>
            <person name="Scott J."/>
            <person name="Roe B.A."/>
            <person name="Savic D.J."/>
        </authorList>
    </citation>
    <scope>NUCLEOTIDE SEQUENCE [LARGE SCALE GENOMIC DNA]</scope>
    <source>
        <strain>NZ131</strain>
    </source>
</reference>
<gene>
    <name evidence="1" type="primary">efp</name>
    <name type="ordered locus">Spy49_1420c</name>
</gene>
<protein>
    <recommendedName>
        <fullName evidence="1">Elongation factor P</fullName>
        <shortName evidence="1">EF-P</shortName>
    </recommendedName>
</protein>
<dbReference type="EMBL" id="CP000829">
    <property type="protein sequence ID" value="ACI61694.1"/>
    <property type="molecule type" value="Genomic_DNA"/>
</dbReference>
<dbReference type="SMR" id="B5XI32"/>
<dbReference type="KEGG" id="soz:Spy49_1420c"/>
<dbReference type="HOGENOM" id="CLU_074944_3_0_9"/>
<dbReference type="UniPathway" id="UPA00345"/>
<dbReference type="Proteomes" id="UP000001039">
    <property type="component" value="Chromosome"/>
</dbReference>
<dbReference type="GO" id="GO:0005737">
    <property type="term" value="C:cytoplasm"/>
    <property type="evidence" value="ECO:0007669"/>
    <property type="project" value="UniProtKB-SubCell"/>
</dbReference>
<dbReference type="GO" id="GO:0003746">
    <property type="term" value="F:translation elongation factor activity"/>
    <property type="evidence" value="ECO:0007669"/>
    <property type="project" value="UniProtKB-UniRule"/>
</dbReference>
<dbReference type="GO" id="GO:0043043">
    <property type="term" value="P:peptide biosynthetic process"/>
    <property type="evidence" value="ECO:0007669"/>
    <property type="project" value="InterPro"/>
</dbReference>
<dbReference type="CDD" id="cd04470">
    <property type="entry name" value="S1_EF-P_repeat_1"/>
    <property type="match status" value="1"/>
</dbReference>
<dbReference type="CDD" id="cd05794">
    <property type="entry name" value="S1_EF-P_repeat_2"/>
    <property type="match status" value="1"/>
</dbReference>
<dbReference type="FunFam" id="2.30.30.30:FF:000003">
    <property type="entry name" value="Elongation factor P"/>
    <property type="match status" value="1"/>
</dbReference>
<dbReference type="FunFam" id="2.40.50.140:FF:000004">
    <property type="entry name" value="Elongation factor P"/>
    <property type="match status" value="1"/>
</dbReference>
<dbReference type="FunFam" id="2.40.50.140:FF:000009">
    <property type="entry name" value="Elongation factor P"/>
    <property type="match status" value="1"/>
</dbReference>
<dbReference type="Gene3D" id="2.30.30.30">
    <property type="match status" value="1"/>
</dbReference>
<dbReference type="Gene3D" id="2.40.50.140">
    <property type="entry name" value="Nucleic acid-binding proteins"/>
    <property type="match status" value="2"/>
</dbReference>
<dbReference type="HAMAP" id="MF_00141">
    <property type="entry name" value="EF_P"/>
    <property type="match status" value="1"/>
</dbReference>
<dbReference type="InterPro" id="IPR015365">
    <property type="entry name" value="Elong-fact-P_C"/>
</dbReference>
<dbReference type="InterPro" id="IPR012340">
    <property type="entry name" value="NA-bd_OB-fold"/>
</dbReference>
<dbReference type="InterPro" id="IPR014722">
    <property type="entry name" value="Rib_uL2_dom2"/>
</dbReference>
<dbReference type="InterPro" id="IPR020599">
    <property type="entry name" value="Transl_elong_fac_P/YeiP"/>
</dbReference>
<dbReference type="InterPro" id="IPR013185">
    <property type="entry name" value="Transl_elong_KOW-like"/>
</dbReference>
<dbReference type="InterPro" id="IPR001059">
    <property type="entry name" value="Transl_elong_P/YeiP_cen"/>
</dbReference>
<dbReference type="InterPro" id="IPR013852">
    <property type="entry name" value="Transl_elong_P/YeiP_CS"/>
</dbReference>
<dbReference type="InterPro" id="IPR011768">
    <property type="entry name" value="Transl_elongation_fac_P"/>
</dbReference>
<dbReference type="InterPro" id="IPR008991">
    <property type="entry name" value="Translation_prot_SH3-like_sf"/>
</dbReference>
<dbReference type="NCBIfam" id="TIGR00038">
    <property type="entry name" value="efp"/>
    <property type="match status" value="1"/>
</dbReference>
<dbReference type="NCBIfam" id="NF001810">
    <property type="entry name" value="PRK00529.1"/>
    <property type="match status" value="1"/>
</dbReference>
<dbReference type="PANTHER" id="PTHR30053">
    <property type="entry name" value="ELONGATION FACTOR P"/>
    <property type="match status" value="1"/>
</dbReference>
<dbReference type="PANTHER" id="PTHR30053:SF12">
    <property type="entry name" value="ELONGATION FACTOR P (EF-P) FAMILY PROTEIN"/>
    <property type="match status" value="1"/>
</dbReference>
<dbReference type="Pfam" id="PF01132">
    <property type="entry name" value="EFP"/>
    <property type="match status" value="1"/>
</dbReference>
<dbReference type="Pfam" id="PF08207">
    <property type="entry name" value="EFP_N"/>
    <property type="match status" value="1"/>
</dbReference>
<dbReference type="Pfam" id="PF09285">
    <property type="entry name" value="Elong-fact-P_C"/>
    <property type="match status" value="1"/>
</dbReference>
<dbReference type="PIRSF" id="PIRSF005901">
    <property type="entry name" value="EF-P"/>
    <property type="match status" value="1"/>
</dbReference>
<dbReference type="SMART" id="SM01185">
    <property type="entry name" value="EFP"/>
    <property type="match status" value="1"/>
</dbReference>
<dbReference type="SMART" id="SM00841">
    <property type="entry name" value="Elong-fact-P_C"/>
    <property type="match status" value="1"/>
</dbReference>
<dbReference type="SUPFAM" id="SSF50249">
    <property type="entry name" value="Nucleic acid-binding proteins"/>
    <property type="match status" value="2"/>
</dbReference>
<dbReference type="SUPFAM" id="SSF50104">
    <property type="entry name" value="Translation proteins SH3-like domain"/>
    <property type="match status" value="1"/>
</dbReference>
<dbReference type="PROSITE" id="PS01275">
    <property type="entry name" value="EFP"/>
    <property type="match status" value="1"/>
</dbReference>
<proteinExistence type="inferred from homology"/>
<feature type="chain" id="PRO_1000096214" description="Elongation factor P">
    <location>
        <begin position="1"/>
        <end position="185"/>
    </location>
</feature>